<evidence type="ECO:0000255" key="1">
    <source>
        <dbReference type="HAMAP-Rule" id="MF_01014"/>
    </source>
</evidence>
<dbReference type="EC" id="5.3.1.16" evidence="1"/>
<dbReference type="EMBL" id="CP000031">
    <property type="protein sequence ID" value="AAV95536.1"/>
    <property type="molecule type" value="Genomic_DNA"/>
</dbReference>
<dbReference type="RefSeq" id="WP_011047992.1">
    <property type="nucleotide sequence ID" value="NC_003911.12"/>
</dbReference>
<dbReference type="SMR" id="Q5LR59"/>
<dbReference type="STRING" id="246200.SPO2272"/>
<dbReference type="PaxDb" id="246200-SPO2272"/>
<dbReference type="KEGG" id="sil:SPO2272"/>
<dbReference type="eggNOG" id="COG0106">
    <property type="taxonomic scope" value="Bacteria"/>
</dbReference>
<dbReference type="HOGENOM" id="CLU_048577_1_1_5"/>
<dbReference type="OrthoDB" id="9807749at2"/>
<dbReference type="UniPathway" id="UPA00031">
    <property type="reaction ID" value="UER00009"/>
</dbReference>
<dbReference type="Proteomes" id="UP000001023">
    <property type="component" value="Chromosome"/>
</dbReference>
<dbReference type="GO" id="GO:0005737">
    <property type="term" value="C:cytoplasm"/>
    <property type="evidence" value="ECO:0007669"/>
    <property type="project" value="UniProtKB-SubCell"/>
</dbReference>
<dbReference type="GO" id="GO:0003949">
    <property type="term" value="F:1-(5-phosphoribosyl)-5-[(5-phosphoribosylamino)methylideneamino]imidazole-4-carboxamide isomerase activity"/>
    <property type="evidence" value="ECO:0007669"/>
    <property type="project" value="UniProtKB-UniRule"/>
</dbReference>
<dbReference type="GO" id="GO:0000105">
    <property type="term" value="P:L-histidine biosynthetic process"/>
    <property type="evidence" value="ECO:0007669"/>
    <property type="project" value="UniProtKB-UniRule"/>
</dbReference>
<dbReference type="GO" id="GO:0000162">
    <property type="term" value="P:L-tryptophan biosynthetic process"/>
    <property type="evidence" value="ECO:0007669"/>
    <property type="project" value="TreeGrafter"/>
</dbReference>
<dbReference type="CDD" id="cd04732">
    <property type="entry name" value="HisA"/>
    <property type="match status" value="1"/>
</dbReference>
<dbReference type="FunFam" id="3.20.20.70:FF:000009">
    <property type="entry name" value="1-(5-phosphoribosyl)-5-[(5-phosphoribosylamino)methylideneamino] imidazole-4-carboxamide isomerase"/>
    <property type="match status" value="1"/>
</dbReference>
<dbReference type="Gene3D" id="3.20.20.70">
    <property type="entry name" value="Aldolase class I"/>
    <property type="match status" value="1"/>
</dbReference>
<dbReference type="HAMAP" id="MF_01014">
    <property type="entry name" value="HisA"/>
    <property type="match status" value="1"/>
</dbReference>
<dbReference type="InterPro" id="IPR013785">
    <property type="entry name" value="Aldolase_TIM"/>
</dbReference>
<dbReference type="InterPro" id="IPR006062">
    <property type="entry name" value="His_biosynth"/>
</dbReference>
<dbReference type="InterPro" id="IPR044524">
    <property type="entry name" value="Isoase_HisA-like"/>
</dbReference>
<dbReference type="InterPro" id="IPR023016">
    <property type="entry name" value="Isoase_HisA-like_bact"/>
</dbReference>
<dbReference type="InterPro" id="IPR011060">
    <property type="entry name" value="RibuloseP-bd_barrel"/>
</dbReference>
<dbReference type="PANTHER" id="PTHR43090">
    <property type="entry name" value="1-(5-PHOSPHORIBOSYL)-5-[(5-PHOSPHORIBOSYLAMINO)METHYLIDENEAMINO] IMIDAZOLE-4-CARBOXAMIDE ISOMERASE"/>
    <property type="match status" value="1"/>
</dbReference>
<dbReference type="PANTHER" id="PTHR43090:SF2">
    <property type="entry name" value="1-(5-PHOSPHORIBOSYL)-5-[(5-PHOSPHORIBOSYLAMINO)METHYLIDENEAMINO] IMIDAZOLE-4-CARBOXAMIDE ISOMERASE"/>
    <property type="match status" value="1"/>
</dbReference>
<dbReference type="Pfam" id="PF00977">
    <property type="entry name" value="His_biosynth"/>
    <property type="match status" value="1"/>
</dbReference>
<dbReference type="SUPFAM" id="SSF51366">
    <property type="entry name" value="Ribulose-phoshate binding barrel"/>
    <property type="match status" value="1"/>
</dbReference>
<reference key="1">
    <citation type="journal article" date="2004" name="Nature">
        <title>Genome sequence of Silicibacter pomeroyi reveals adaptations to the marine environment.</title>
        <authorList>
            <person name="Moran M.A."/>
            <person name="Buchan A."/>
            <person name="Gonzalez J.M."/>
            <person name="Heidelberg J.F."/>
            <person name="Whitman W.B."/>
            <person name="Kiene R.P."/>
            <person name="Henriksen J.R."/>
            <person name="King G.M."/>
            <person name="Belas R."/>
            <person name="Fuqua C."/>
            <person name="Brinkac L.M."/>
            <person name="Lewis M."/>
            <person name="Johri S."/>
            <person name="Weaver B."/>
            <person name="Pai G."/>
            <person name="Eisen J.A."/>
            <person name="Rahe E."/>
            <person name="Sheldon W.M."/>
            <person name="Ye W."/>
            <person name="Miller T.R."/>
            <person name="Carlton J."/>
            <person name="Rasko D.A."/>
            <person name="Paulsen I.T."/>
            <person name="Ren Q."/>
            <person name="Daugherty S.C."/>
            <person name="DeBoy R.T."/>
            <person name="Dodson R.J."/>
            <person name="Durkin A.S."/>
            <person name="Madupu R."/>
            <person name="Nelson W.C."/>
            <person name="Sullivan S.A."/>
            <person name="Rosovitz M.J."/>
            <person name="Haft D.H."/>
            <person name="Selengut J."/>
            <person name="Ward N."/>
        </authorList>
    </citation>
    <scope>NUCLEOTIDE SEQUENCE [LARGE SCALE GENOMIC DNA]</scope>
    <source>
        <strain>ATCC 700808 / DSM 15171 / DSS-3</strain>
    </source>
</reference>
<reference key="2">
    <citation type="journal article" date="2014" name="Stand. Genomic Sci.">
        <title>An updated genome annotation for the model marine bacterium Ruegeria pomeroyi DSS-3.</title>
        <authorList>
            <person name="Rivers A.R."/>
            <person name="Smith C.B."/>
            <person name="Moran M.A."/>
        </authorList>
    </citation>
    <scope>GENOME REANNOTATION</scope>
    <source>
        <strain>ATCC 700808 / DSM 15171 / DSS-3</strain>
    </source>
</reference>
<keyword id="KW-0028">Amino-acid biosynthesis</keyword>
<keyword id="KW-0963">Cytoplasm</keyword>
<keyword id="KW-0368">Histidine biosynthesis</keyword>
<keyword id="KW-0413">Isomerase</keyword>
<keyword id="KW-1185">Reference proteome</keyword>
<organism>
    <name type="scientific">Ruegeria pomeroyi (strain ATCC 700808 / DSM 15171 / DSS-3)</name>
    <name type="common">Silicibacter pomeroyi</name>
    <dbReference type="NCBI Taxonomy" id="246200"/>
    <lineage>
        <taxon>Bacteria</taxon>
        <taxon>Pseudomonadati</taxon>
        <taxon>Pseudomonadota</taxon>
        <taxon>Alphaproteobacteria</taxon>
        <taxon>Rhodobacterales</taxon>
        <taxon>Roseobacteraceae</taxon>
        <taxon>Ruegeria</taxon>
    </lineage>
</organism>
<feature type="chain" id="PRO_0000229085" description="1-(5-phosphoribosyl)-5-[(5-phosphoribosylamino)methylideneamino] imidazole-4-carboxamide isomerase 2">
    <location>
        <begin position="1"/>
        <end position="247"/>
    </location>
</feature>
<feature type="active site" description="Proton acceptor" evidence="1">
    <location>
        <position position="8"/>
    </location>
</feature>
<feature type="active site" description="Proton donor" evidence="1">
    <location>
        <position position="128"/>
    </location>
</feature>
<gene>
    <name evidence="1" type="primary">hisA2</name>
    <name type="ordered locus">SPO2272</name>
</gene>
<protein>
    <recommendedName>
        <fullName evidence="1">1-(5-phosphoribosyl)-5-[(5-phosphoribosylamino)methylideneamino] imidazole-4-carboxamide isomerase 2</fullName>
        <ecNumber evidence="1">5.3.1.16</ecNumber>
    </recommendedName>
    <alternativeName>
        <fullName evidence="1">Phosphoribosylformimino-5-aminoimidazole carboxamide ribotide isomerase 2</fullName>
    </alternativeName>
</protein>
<name>HIS42_RUEPO</name>
<accession>Q5LR59</accession>
<proteinExistence type="inferred from homology"/>
<comment type="catalytic activity">
    <reaction evidence="1">
        <text>1-(5-phospho-beta-D-ribosyl)-5-[(5-phospho-beta-D-ribosylamino)methylideneamino]imidazole-4-carboxamide = 5-[(5-phospho-1-deoxy-D-ribulos-1-ylimino)methylamino]-1-(5-phospho-beta-D-ribosyl)imidazole-4-carboxamide</text>
        <dbReference type="Rhea" id="RHEA:15469"/>
        <dbReference type="ChEBI" id="CHEBI:58435"/>
        <dbReference type="ChEBI" id="CHEBI:58525"/>
        <dbReference type="EC" id="5.3.1.16"/>
    </reaction>
</comment>
<comment type="pathway">
    <text evidence="1">Amino-acid biosynthesis; L-histidine biosynthesis; L-histidine from 5-phospho-alpha-D-ribose 1-diphosphate: step 4/9.</text>
</comment>
<comment type="subcellular location">
    <subcellularLocation>
        <location evidence="1">Cytoplasm</location>
    </subcellularLocation>
</comment>
<comment type="similarity">
    <text evidence="1">Belongs to the HisA/HisF family.</text>
</comment>
<sequence length="247" mass="26800">MIIYPTMELQNGRCVTLERGRLDAPMLWHVDPFETVSGWASAGAEWMHLTDLDAVAGTSGNAELVEQIIRKAEIPVQLAGGMRSRERIEHWIDKGAGRIVIGTLAARDPELVKELAKRHPDQIVLSVDVWQGHVMTDGWRSQSAYTPEAFIDAFADVPFAAIVVTDIDSDVEEVEAKLGLISGLAAHSRTPVIASGVVRGADDISRLAYVPNIAGALVGRALFRKSLSLEDALSIAASAHERVAQFQ</sequence>